<organism>
    <name type="scientific">Oenothera glazioviana</name>
    <name type="common">Large-flowered evening primrose</name>
    <name type="synonym">Oenothera erythrosepala</name>
    <dbReference type="NCBI Taxonomy" id="482428"/>
    <lineage>
        <taxon>Eukaryota</taxon>
        <taxon>Viridiplantae</taxon>
        <taxon>Streptophyta</taxon>
        <taxon>Embryophyta</taxon>
        <taxon>Tracheophyta</taxon>
        <taxon>Spermatophyta</taxon>
        <taxon>Magnoliopsida</taxon>
        <taxon>eudicotyledons</taxon>
        <taxon>Gunneridae</taxon>
        <taxon>Pentapetalae</taxon>
        <taxon>rosids</taxon>
        <taxon>malvids</taxon>
        <taxon>Myrtales</taxon>
        <taxon>Onagraceae</taxon>
        <taxon>Onagroideae</taxon>
        <taxon>Onagreae</taxon>
        <taxon>Oenothera</taxon>
    </lineage>
</organism>
<comment type="function">
    <text evidence="1">NDH shuttles electrons from NAD(P)H:plastoquinone, via FMN and iron-sulfur (Fe-S) centers, to quinones in the photosynthetic chain and possibly in a chloroplast respiratory chain. The immediate electron acceptor for the enzyme in this species is believed to be plastoquinone. Couples the redox reaction to proton translocation, and thus conserves the redox energy in a proton gradient (By similarity).</text>
</comment>
<comment type="catalytic activity">
    <reaction>
        <text>a plastoquinone + NADH + (n+1) H(+)(in) = a plastoquinol + NAD(+) + n H(+)(out)</text>
        <dbReference type="Rhea" id="RHEA:42608"/>
        <dbReference type="Rhea" id="RHEA-COMP:9561"/>
        <dbReference type="Rhea" id="RHEA-COMP:9562"/>
        <dbReference type="ChEBI" id="CHEBI:15378"/>
        <dbReference type="ChEBI" id="CHEBI:17757"/>
        <dbReference type="ChEBI" id="CHEBI:57540"/>
        <dbReference type="ChEBI" id="CHEBI:57945"/>
        <dbReference type="ChEBI" id="CHEBI:62192"/>
    </reaction>
</comment>
<comment type="catalytic activity">
    <reaction>
        <text>a plastoquinone + NADPH + (n+1) H(+)(in) = a plastoquinol + NADP(+) + n H(+)(out)</text>
        <dbReference type="Rhea" id="RHEA:42612"/>
        <dbReference type="Rhea" id="RHEA-COMP:9561"/>
        <dbReference type="Rhea" id="RHEA-COMP:9562"/>
        <dbReference type="ChEBI" id="CHEBI:15378"/>
        <dbReference type="ChEBI" id="CHEBI:17757"/>
        <dbReference type="ChEBI" id="CHEBI:57783"/>
        <dbReference type="ChEBI" id="CHEBI:58349"/>
        <dbReference type="ChEBI" id="CHEBI:62192"/>
    </reaction>
</comment>
<comment type="subunit">
    <text evidence="1">NDH is composed of at least 16 different subunits, 5 of which are encoded in the nucleus.</text>
</comment>
<comment type="subcellular location">
    <subcellularLocation>
        <location evidence="1">Plastid</location>
        <location evidence="1">Chloroplast thylakoid membrane</location>
        <topology evidence="1">Multi-pass membrane protein</topology>
    </subcellularLocation>
</comment>
<comment type="similarity">
    <text evidence="3">Belongs to the complex I subunit 5 family.</text>
</comment>
<feature type="chain" id="PRO_0000360959" description="NAD(P)H-quinone oxidoreductase subunit 5, chloroplastic">
    <location>
        <begin position="1"/>
        <end position="772"/>
    </location>
</feature>
<feature type="transmembrane region" description="Helical" evidence="2">
    <location>
        <begin position="9"/>
        <end position="29"/>
    </location>
</feature>
<feature type="transmembrane region" description="Helical" evidence="2">
    <location>
        <begin position="40"/>
        <end position="60"/>
    </location>
</feature>
<feature type="transmembrane region" description="Helical" evidence="2">
    <location>
        <begin position="89"/>
        <end position="109"/>
    </location>
</feature>
<feature type="transmembrane region" description="Helical" evidence="2">
    <location>
        <begin position="125"/>
        <end position="145"/>
    </location>
</feature>
<feature type="transmembrane region" description="Helical" evidence="2">
    <location>
        <begin position="147"/>
        <end position="167"/>
    </location>
</feature>
<feature type="transmembrane region" description="Helical" evidence="2">
    <location>
        <begin position="185"/>
        <end position="205"/>
    </location>
</feature>
<feature type="transmembrane region" description="Helical" evidence="2">
    <location>
        <begin position="220"/>
        <end position="240"/>
    </location>
</feature>
<feature type="transmembrane region" description="Helical" evidence="2">
    <location>
        <begin position="259"/>
        <end position="279"/>
    </location>
</feature>
<feature type="transmembrane region" description="Helical" evidence="2">
    <location>
        <begin position="290"/>
        <end position="312"/>
    </location>
</feature>
<feature type="transmembrane region" description="Helical" evidence="2">
    <location>
        <begin position="328"/>
        <end position="348"/>
    </location>
</feature>
<feature type="transmembrane region" description="Helical" evidence="2">
    <location>
        <begin position="355"/>
        <end position="375"/>
    </location>
</feature>
<feature type="transmembrane region" description="Helical" evidence="2">
    <location>
        <begin position="397"/>
        <end position="417"/>
    </location>
</feature>
<feature type="transmembrane region" description="Helical" evidence="2">
    <location>
        <begin position="426"/>
        <end position="446"/>
    </location>
</feature>
<feature type="transmembrane region" description="Helical" evidence="2">
    <location>
        <begin position="550"/>
        <end position="570"/>
    </location>
</feature>
<feature type="transmembrane region" description="Helical" evidence="2">
    <location>
        <begin position="604"/>
        <end position="624"/>
    </location>
</feature>
<feature type="transmembrane region" description="Helical" evidence="2">
    <location>
        <begin position="731"/>
        <end position="751"/>
    </location>
</feature>
<name>NU5C_OENGL</name>
<evidence type="ECO:0000250" key="1"/>
<evidence type="ECO:0000255" key="2"/>
<evidence type="ECO:0000305" key="3"/>
<sequence length="772" mass="87716">MEYTYQYSWIIPFIPLPVPILIGMGLLLFPTATKNHRRVWSFPSILLLSMVMLLSVYLSIQQINRSFIYQYVWSWTINNDFSLEFGHLIDPLASIMLILITTVGILVLFYSDNYMSHDQGYLRFFAYLSFFNTSMLGLVTSSNLIQIYIFWELVGMCSYLLIGFWFTRPIAATACQKAFVTNRVGDFGLLLGILGLYWITGSFEFRDLFEIVNNLIDNNNQVHFLFVTLCSFLLFAGAVAKSAQFPLHVWLPDAMEGPTPISALIHAATMVAAGIFLVARLLPLFVITPYIMNLISLIGIITVLLGATLALAQKDIKRSLAYSTMSQLGYMMLALGMGSYRAALFHLITHAYSKALLFLGSGSIIHSMESIVGYSPDKSQNMVLMGGLKKHVPITKTAFLVGTLSLCGIPPLACFWSKDEILNDSWLYSPIFAIIACSTAGFTAFYMFRVYLLTFDGHLNVHFQNYSGQKSSSVYSISLWGKQVPKRIQNPFCLLNLLTMNNNESTSFFWNNKCKLDGNVKKRIRPFITVTHFPNRKTFSYPHESDNTMLFSLFVLVLFTLFVAAIGIPFNQEGSDCDILSKLLNPSINLLHQNSNNFTDWYEFVTNASFSVSIALLGIFIATFLYKPIYSSLQNFNLLNSFYKRSANRVMWDKIQNWIYDWSYNRGYIDSFYTISLTGGIRGLAELSHFFDRRVIDGILNGFGLTSFFLGESLKYFGGGRISSYLLLYSIFIFIFLLMDSFFTNLPFFVLCQFLDSSFSMSISGFLLYENF</sequence>
<keyword id="KW-0150">Chloroplast</keyword>
<keyword id="KW-0472">Membrane</keyword>
<keyword id="KW-0520">NAD</keyword>
<keyword id="KW-0521">NADP</keyword>
<keyword id="KW-0934">Plastid</keyword>
<keyword id="KW-0618">Plastoquinone</keyword>
<keyword id="KW-0874">Quinone</keyword>
<keyword id="KW-0793">Thylakoid</keyword>
<keyword id="KW-1278">Translocase</keyword>
<keyword id="KW-0812">Transmembrane</keyword>
<keyword id="KW-1133">Transmembrane helix</keyword>
<keyword id="KW-0813">Transport</keyword>
<geneLocation type="chloroplast"/>
<protein>
    <recommendedName>
        <fullName>NAD(P)H-quinone oxidoreductase subunit 5, chloroplastic</fullName>
        <ecNumber>7.1.1.-</ecNumber>
    </recommendedName>
    <alternativeName>
        <fullName>NAD(P)H dehydrogenase subunit 5</fullName>
    </alternativeName>
    <alternativeName>
        <fullName>NADH-plastoquinone oxidoreductase subunit 5</fullName>
    </alternativeName>
</protein>
<proteinExistence type="inferred from homology"/>
<reference key="1">
    <citation type="journal article" date="2008" name="Nucleic Acids Res.">
        <title>The complete nucleotide sequences of the five genetically distinct plastid genomes of Oenothera, subsection Oenothera: I. Sequence evaluation and plastome evolution.</title>
        <authorList>
            <person name="Greiner S."/>
            <person name="Wang X."/>
            <person name="Rauwolf U."/>
            <person name="Silber M.V."/>
            <person name="Mayer K."/>
            <person name="Meurer J."/>
            <person name="Haberer G."/>
            <person name="Herrmann R.G."/>
        </authorList>
    </citation>
    <scope>NUCLEOTIDE SEQUENCE [LARGE SCALE GENOMIC DNA]</scope>
    <source>
        <strain>cv. Rr-lamarckiana Sweden</strain>
    </source>
</reference>
<accession>B0Z590</accession>
<gene>
    <name type="primary">ndhF</name>
</gene>
<dbReference type="EC" id="7.1.1.-"/>
<dbReference type="EMBL" id="EU262890">
    <property type="protein sequence ID" value="ABX10083.1"/>
    <property type="molecule type" value="Genomic_DNA"/>
</dbReference>
<dbReference type="RefSeq" id="YP_001687329.1">
    <property type="nucleotide sequence ID" value="NC_010360.2"/>
</dbReference>
<dbReference type="SMR" id="B0Z590"/>
<dbReference type="GeneID" id="5955250"/>
<dbReference type="GO" id="GO:0009535">
    <property type="term" value="C:chloroplast thylakoid membrane"/>
    <property type="evidence" value="ECO:0007669"/>
    <property type="project" value="UniProtKB-SubCell"/>
</dbReference>
<dbReference type="GO" id="GO:0008137">
    <property type="term" value="F:NADH dehydrogenase (ubiquinone) activity"/>
    <property type="evidence" value="ECO:0007669"/>
    <property type="project" value="InterPro"/>
</dbReference>
<dbReference type="GO" id="GO:0048038">
    <property type="term" value="F:quinone binding"/>
    <property type="evidence" value="ECO:0007669"/>
    <property type="project" value="UniProtKB-KW"/>
</dbReference>
<dbReference type="GO" id="GO:0042773">
    <property type="term" value="P:ATP synthesis coupled electron transport"/>
    <property type="evidence" value="ECO:0007669"/>
    <property type="project" value="InterPro"/>
</dbReference>
<dbReference type="GO" id="GO:0015990">
    <property type="term" value="P:electron transport coupled proton transport"/>
    <property type="evidence" value="ECO:0007669"/>
    <property type="project" value="TreeGrafter"/>
</dbReference>
<dbReference type="Gene3D" id="1.20.5.2700">
    <property type="match status" value="1"/>
</dbReference>
<dbReference type="InterPro" id="IPR002128">
    <property type="entry name" value="NADH_UbQ_OxRdtase_chlpt_su5_C"/>
</dbReference>
<dbReference type="InterPro" id="IPR018393">
    <property type="entry name" value="NADHpl_OxRdtase_5_subgr"/>
</dbReference>
<dbReference type="InterPro" id="IPR001750">
    <property type="entry name" value="ND/Mrp_TM"/>
</dbReference>
<dbReference type="InterPro" id="IPR003945">
    <property type="entry name" value="NU5C-like"/>
</dbReference>
<dbReference type="InterPro" id="IPR001516">
    <property type="entry name" value="Proton_antipo_N"/>
</dbReference>
<dbReference type="NCBIfam" id="TIGR01974">
    <property type="entry name" value="NDH_I_L"/>
    <property type="match status" value="1"/>
</dbReference>
<dbReference type="NCBIfam" id="NF005141">
    <property type="entry name" value="PRK06590.1"/>
    <property type="match status" value="1"/>
</dbReference>
<dbReference type="PANTHER" id="PTHR42829">
    <property type="entry name" value="NADH-UBIQUINONE OXIDOREDUCTASE CHAIN 5"/>
    <property type="match status" value="1"/>
</dbReference>
<dbReference type="PANTHER" id="PTHR42829:SF2">
    <property type="entry name" value="NADH-UBIQUINONE OXIDOREDUCTASE CHAIN 5"/>
    <property type="match status" value="1"/>
</dbReference>
<dbReference type="Pfam" id="PF01010">
    <property type="entry name" value="Proton_antipo_C"/>
    <property type="match status" value="1"/>
</dbReference>
<dbReference type="Pfam" id="PF00361">
    <property type="entry name" value="Proton_antipo_M"/>
    <property type="match status" value="1"/>
</dbReference>
<dbReference type="Pfam" id="PF00662">
    <property type="entry name" value="Proton_antipo_N"/>
    <property type="match status" value="1"/>
</dbReference>
<dbReference type="PRINTS" id="PR01434">
    <property type="entry name" value="NADHDHGNASE5"/>
</dbReference>
<dbReference type="PRINTS" id="PR01435">
    <property type="entry name" value="NPOXDRDTASE5"/>
</dbReference>